<organism>
    <name type="scientific">Yersinia pestis</name>
    <dbReference type="NCBI Taxonomy" id="632"/>
    <lineage>
        <taxon>Bacteria</taxon>
        <taxon>Pseudomonadati</taxon>
        <taxon>Pseudomonadota</taxon>
        <taxon>Gammaproteobacteria</taxon>
        <taxon>Enterobacterales</taxon>
        <taxon>Yersiniaceae</taxon>
        <taxon>Yersinia</taxon>
    </lineage>
</organism>
<name>MATP_YERPE</name>
<protein>
    <recommendedName>
        <fullName evidence="1">Macrodomain Ter protein</fullName>
    </recommendedName>
</protein>
<feature type="chain" id="PRO_0000070362" description="Macrodomain Ter protein">
    <location>
        <begin position="1"/>
        <end position="151"/>
    </location>
</feature>
<feature type="helix" evidence="3">
    <location>
        <begin position="7"/>
        <end position="23"/>
    </location>
</feature>
<feature type="helix" evidence="3">
    <location>
        <begin position="34"/>
        <end position="43"/>
    </location>
</feature>
<feature type="turn" evidence="3">
    <location>
        <begin position="44"/>
        <end position="46"/>
    </location>
</feature>
<feature type="helix" evidence="3">
    <location>
        <begin position="51"/>
        <end position="61"/>
    </location>
</feature>
<feature type="helix" evidence="3">
    <location>
        <begin position="64"/>
        <end position="83"/>
    </location>
</feature>
<feature type="helix" evidence="3">
    <location>
        <begin position="87"/>
        <end position="89"/>
    </location>
</feature>
<feature type="strand" evidence="3">
    <location>
        <begin position="91"/>
        <end position="97"/>
    </location>
</feature>
<feature type="helix" evidence="3">
    <location>
        <begin position="98"/>
        <end position="111"/>
    </location>
</feature>
<feature type="helix" evidence="3">
    <location>
        <begin position="115"/>
        <end position="148"/>
    </location>
</feature>
<proteinExistence type="evidence at protein level"/>
<accession>Q8ZG78</accession>
<accession>Q0WGY4</accession>
<accession>Q8D055</accession>
<comment type="function">
    <text evidence="1">Required for spatial organization of the terminus region of the chromosome (Ter macrodomain) during the cell cycle. Prevents early segregation of duplicated Ter macrodomains during cell division. Binds specifically to matS, which is a 13 bp signature motif repeated within the Ter macrodomain.</text>
</comment>
<comment type="subunit">
    <text evidence="1">Homodimer.</text>
</comment>
<comment type="subcellular location">
    <subcellularLocation>
        <location evidence="1">Cytoplasm</location>
    </subcellularLocation>
</comment>
<comment type="similarity">
    <text evidence="1">Belongs to the MatP family.</text>
</comment>
<comment type="sequence caution" evidence="2">
    <conflict type="erroneous initiation">
        <sequence resource="EMBL-CDS" id="AAM86289"/>
    </conflict>
    <text>Extended N-terminus.</text>
</comment>
<comment type="sequence caution" evidence="2">
    <conflict type="erroneous initiation">
        <sequence resource="EMBL-CDS" id="AAS61134"/>
    </conflict>
    <text>Extended N-terminus.</text>
</comment>
<keyword id="KW-0002">3D-structure</keyword>
<keyword id="KW-0131">Cell cycle</keyword>
<keyword id="KW-0132">Cell division</keyword>
<keyword id="KW-0963">Cytoplasm</keyword>
<keyword id="KW-0238">DNA-binding</keyword>
<keyword id="KW-1185">Reference proteome</keyword>
<sequence length="151" mass="17934">MKYQQLENLESGWKWAYLVKKHREGEAITRHIENSAAQDAVEQLMKLENEPVKVQEWIDAHMNVNLATRMKQTIRARRKRHFNAEHQHTRKKSIDLEFLVWQRLAVLARRRGNTLSDTVVQLIEDAERKEKYASQMSSLKQDLKDILDKEV</sequence>
<dbReference type="EMBL" id="AL590842">
    <property type="protein sequence ID" value="CAL20084.1"/>
    <property type="molecule type" value="Genomic_DNA"/>
</dbReference>
<dbReference type="EMBL" id="AE009952">
    <property type="protein sequence ID" value="AAM86289.1"/>
    <property type="status" value="ALT_INIT"/>
    <property type="molecule type" value="Genomic_DNA"/>
</dbReference>
<dbReference type="EMBL" id="AE017042">
    <property type="protein sequence ID" value="AAS61134.1"/>
    <property type="status" value="ALT_INIT"/>
    <property type="molecule type" value="Genomic_DNA"/>
</dbReference>
<dbReference type="PIR" id="AB0175">
    <property type="entry name" value="AB0175"/>
</dbReference>
<dbReference type="RefSeq" id="WP_002226586.1">
    <property type="nucleotide sequence ID" value="NZ_WUCM01000140.1"/>
</dbReference>
<dbReference type="RefSeq" id="YP_002346454.1">
    <property type="nucleotide sequence ID" value="NC_003143.1"/>
</dbReference>
<dbReference type="PDB" id="3VEA">
    <property type="method" value="X-ray"/>
    <property type="resolution" value="2.55 A"/>
    <property type="chains" value="A/B=1-151"/>
</dbReference>
<dbReference type="PDB" id="3VEB">
    <property type="method" value="X-ray"/>
    <property type="resolution" value="2.80 A"/>
    <property type="chains" value="A/B=1-151"/>
</dbReference>
<dbReference type="PDBsum" id="3VEA"/>
<dbReference type="PDBsum" id="3VEB"/>
<dbReference type="SMR" id="Q8ZG78"/>
<dbReference type="STRING" id="214092.YPO1433"/>
<dbReference type="PaxDb" id="214092-YPO1433"/>
<dbReference type="DNASU" id="1147684"/>
<dbReference type="EnsemblBacteria" id="AAS61134">
    <property type="protein sequence ID" value="AAS61134"/>
    <property type="gene ID" value="YP_0877"/>
</dbReference>
<dbReference type="GeneID" id="57977130"/>
<dbReference type="KEGG" id="ype:YPO1433"/>
<dbReference type="KEGG" id="ypk:y2737"/>
<dbReference type="KEGG" id="ypm:YP_0877"/>
<dbReference type="PATRIC" id="fig|214092.21.peg.1759"/>
<dbReference type="eggNOG" id="COG3120">
    <property type="taxonomic scope" value="Bacteria"/>
</dbReference>
<dbReference type="HOGENOM" id="CLU_142157_0_0_6"/>
<dbReference type="OrthoDB" id="5814691at2"/>
<dbReference type="EvolutionaryTrace" id="Q8ZG78"/>
<dbReference type="Proteomes" id="UP000000815">
    <property type="component" value="Chromosome"/>
</dbReference>
<dbReference type="Proteomes" id="UP000001019">
    <property type="component" value="Chromosome"/>
</dbReference>
<dbReference type="Proteomes" id="UP000002490">
    <property type="component" value="Chromosome"/>
</dbReference>
<dbReference type="GO" id="GO:0005737">
    <property type="term" value="C:cytoplasm"/>
    <property type="evidence" value="ECO:0007669"/>
    <property type="project" value="UniProtKB-SubCell"/>
</dbReference>
<dbReference type="GO" id="GO:0043565">
    <property type="term" value="F:sequence-specific DNA binding"/>
    <property type="evidence" value="ECO:0007669"/>
    <property type="project" value="UniProtKB-UniRule"/>
</dbReference>
<dbReference type="GO" id="GO:0051301">
    <property type="term" value="P:cell division"/>
    <property type="evidence" value="ECO:0007669"/>
    <property type="project" value="UniProtKB-UniRule"/>
</dbReference>
<dbReference type="GO" id="GO:0006355">
    <property type="term" value="P:regulation of DNA-templated transcription"/>
    <property type="evidence" value="ECO:0007669"/>
    <property type="project" value="InterPro"/>
</dbReference>
<dbReference type="Gene3D" id="1.20.1270.380">
    <property type="entry name" value="MatP, N-terminal domain"/>
    <property type="match status" value="1"/>
</dbReference>
<dbReference type="Gene3D" id="1.10.1220.10">
    <property type="entry name" value="Met repressor-like"/>
    <property type="match status" value="1"/>
</dbReference>
<dbReference type="HAMAP" id="MF_01073">
    <property type="entry name" value="MatP"/>
    <property type="match status" value="1"/>
</dbReference>
<dbReference type="InterPro" id="IPR013321">
    <property type="entry name" value="Arc_rbn_hlx_hlx"/>
</dbReference>
<dbReference type="InterPro" id="IPR009390">
    <property type="entry name" value="MatP"/>
</dbReference>
<dbReference type="InterPro" id="IPR035375">
    <property type="entry name" value="MatP_C"/>
</dbReference>
<dbReference type="InterPro" id="IPR035087">
    <property type="entry name" value="MatP_N"/>
</dbReference>
<dbReference type="InterPro" id="IPR038339">
    <property type="entry name" value="MatP_N_sf"/>
</dbReference>
<dbReference type="NCBIfam" id="NF003471">
    <property type="entry name" value="PRK05097.1"/>
    <property type="match status" value="1"/>
</dbReference>
<dbReference type="Pfam" id="PF06303">
    <property type="entry name" value="MatP"/>
    <property type="match status" value="1"/>
</dbReference>
<dbReference type="Pfam" id="PF17414">
    <property type="entry name" value="MatP_C"/>
    <property type="match status" value="1"/>
</dbReference>
<reference key="1">
    <citation type="journal article" date="2001" name="Nature">
        <title>Genome sequence of Yersinia pestis, the causative agent of plague.</title>
        <authorList>
            <person name="Parkhill J."/>
            <person name="Wren B.W."/>
            <person name="Thomson N.R."/>
            <person name="Titball R.W."/>
            <person name="Holden M.T.G."/>
            <person name="Prentice M.B."/>
            <person name="Sebaihia M."/>
            <person name="James K.D."/>
            <person name="Churcher C.M."/>
            <person name="Mungall K.L."/>
            <person name="Baker S."/>
            <person name="Basham D."/>
            <person name="Bentley S.D."/>
            <person name="Brooks K."/>
            <person name="Cerdeno-Tarraga A.-M."/>
            <person name="Chillingworth T."/>
            <person name="Cronin A."/>
            <person name="Davies R.M."/>
            <person name="Davis P."/>
            <person name="Dougan G."/>
            <person name="Feltwell T."/>
            <person name="Hamlin N."/>
            <person name="Holroyd S."/>
            <person name="Jagels K."/>
            <person name="Karlyshev A.V."/>
            <person name="Leather S."/>
            <person name="Moule S."/>
            <person name="Oyston P.C.F."/>
            <person name="Quail M.A."/>
            <person name="Rutherford K.M."/>
            <person name="Simmonds M."/>
            <person name="Skelton J."/>
            <person name="Stevens K."/>
            <person name="Whitehead S."/>
            <person name="Barrell B.G."/>
        </authorList>
    </citation>
    <scope>NUCLEOTIDE SEQUENCE [LARGE SCALE GENOMIC DNA]</scope>
    <source>
        <strain>CO-92 / Biovar Orientalis</strain>
    </source>
</reference>
<reference key="2">
    <citation type="journal article" date="2002" name="J. Bacteriol.">
        <title>Genome sequence of Yersinia pestis KIM.</title>
        <authorList>
            <person name="Deng W."/>
            <person name="Burland V."/>
            <person name="Plunkett G. III"/>
            <person name="Boutin A."/>
            <person name="Mayhew G.F."/>
            <person name="Liss P."/>
            <person name="Perna N.T."/>
            <person name="Rose D.J."/>
            <person name="Mau B."/>
            <person name="Zhou S."/>
            <person name="Schwartz D.C."/>
            <person name="Fetherston J.D."/>
            <person name="Lindler L.E."/>
            <person name="Brubaker R.R."/>
            <person name="Plano G.V."/>
            <person name="Straley S.C."/>
            <person name="McDonough K.A."/>
            <person name="Nilles M.L."/>
            <person name="Matson J.S."/>
            <person name="Blattner F.R."/>
            <person name="Perry R.D."/>
        </authorList>
    </citation>
    <scope>NUCLEOTIDE SEQUENCE [LARGE SCALE GENOMIC DNA]</scope>
    <source>
        <strain>KIM10+ / Biovar Mediaevalis</strain>
    </source>
</reference>
<reference key="3">
    <citation type="journal article" date="2004" name="DNA Res.">
        <title>Complete genome sequence of Yersinia pestis strain 91001, an isolate avirulent to humans.</title>
        <authorList>
            <person name="Song Y."/>
            <person name="Tong Z."/>
            <person name="Wang J."/>
            <person name="Wang L."/>
            <person name="Guo Z."/>
            <person name="Han Y."/>
            <person name="Zhang J."/>
            <person name="Pei D."/>
            <person name="Zhou D."/>
            <person name="Qin H."/>
            <person name="Pang X."/>
            <person name="Han Y."/>
            <person name="Zhai J."/>
            <person name="Li M."/>
            <person name="Cui B."/>
            <person name="Qi Z."/>
            <person name="Jin L."/>
            <person name="Dai R."/>
            <person name="Chen F."/>
            <person name="Li S."/>
            <person name="Ye C."/>
            <person name="Du Z."/>
            <person name="Lin W."/>
            <person name="Wang J."/>
            <person name="Yu J."/>
            <person name="Yang H."/>
            <person name="Wang J."/>
            <person name="Huang P."/>
            <person name="Yang R."/>
        </authorList>
    </citation>
    <scope>NUCLEOTIDE SEQUENCE [LARGE SCALE GENOMIC DNA]</scope>
    <source>
        <strain>91001 / Biovar Mediaevalis</strain>
    </source>
</reference>
<evidence type="ECO:0000255" key="1">
    <source>
        <dbReference type="HAMAP-Rule" id="MF_01073"/>
    </source>
</evidence>
<evidence type="ECO:0000305" key="2"/>
<evidence type="ECO:0007829" key="3">
    <source>
        <dbReference type="PDB" id="3VEA"/>
    </source>
</evidence>
<gene>
    <name evidence="1" type="primary">matP</name>
    <name type="ordered locus">YPO1433</name>
    <name type="ordered locus">y2737</name>
    <name type="ordered locus">YP_0877</name>
</gene>